<gene>
    <name evidence="1" type="primary">gppA</name>
    <name type="ordered locus">VP3003</name>
</gene>
<accession>Q87KH4</accession>
<proteinExistence type="inferred from homology"/>
<sequence length="497" mass="54689">MSQAGSSPLYAAIDLGSNSFHMLVVRHIDGSVQTMAKIKRKVRLAAGLDEHNSLSMEAMQRGWDCLSLFAERLQDIPTQNIRIVGTATLRTATNVDVFLEKANQILGQPIEVISGEEEAATIYKGVAHTSGGSGRRLVVDIGGASTELIIGEGFEAKALTSLKMGCVTWLENFFKDRQLNARNFEAAIEGAKQTIKPILEQYTDLGWDVCVGASGTVQALQEIMLAQGMDEVITHSKLKRLQKQAMLADHLEELDIEGLTLERALVFPSGLSILIAIFELLEIDAMTLAGGALREGLVYEMVDELRQNDIRARTICSVQSRYQLDCQYGEQVATLAGKLLEQAGGDEWIAEPQGKVLLETTAKLHEIGLTIDFKKGGEHSAYLLQNLDLPGYTRAQKFFIGEIARRYREQLSSLPEQHAISGTSAKRVLRLLRLAVLLTHRRNPSLEPQVELLAEGDKLTLSIDAKWLEANPLTAAELEIESNRQTDIGWPLTITAC</sequence>
<evidence type="ECO:0000255" key="1">
    <source>
        <dbReference type="HAMAP-Rule" id="MF_01550"/>
    </source>
</evidence>
<reference key="1">
    <citation type="journal article" date="2003" name="Lancet">
        <title>Genome sequence of Vibrio parahaemolyticus: a pathogenic mechanism distinct from that of V. cholerae.</title>
        <authorList>
            <person name="Makino K."/>
            <person name="Oshima K."/>
            <person name="Kurokawa K."/>
            <person name="Yokoyama K."/>
            <person name="Uda T."/>
            <person name="Tagomori K."/>
            <person name="Iijima Y."/>
            <person name="Najima M."/>
            <person name="Nakano M."/>
            <person name="Yamashita A."/>
            <person name="Kubota Y."/>
            <person name="Kimura S."/>
            <person name="Yasunaga T."/>
            <person name="Honda T."/>
            <person name="Shinagawa H."/>
            <person name="Hattori M."/>
            <person name="Iida T."/>
        </authorList>
    </citation>
    <scope>NUCLEOTIDE SEQUENCE [LARGE SCALE GENOMIC DNA]</scope>
    <source>
        <strain>RIMD 2210633</strain>
    </source>
</reference>
<name>GPPA_VIBPA</name>
<keyword id="KW-0378">Hydrolase</keyword>
<protein>
    <recommendedName>
        <fullName evidence="1">Guanosine-5'-triphosphate,3'-diphosphate pyrophosphatase</fullName>
        <ecNumber evidence="1">3.6.1.40</ecNumber>
    </recommendedName>
    <alternativeName>
        <fullName evidence="1">Guanosine pentaphosphate phosphohydrolase</fullName>
    </alternativeName>
    <alternativeName>
        <fullName evidence="1">pppGpp-5'-phosphohydrolase</fullName>
    </alternativeName>
</protein>
<feature type="chain" id="PRO_0000194294" description="Guanosine-5'-triphosphate,3'-diphosphate pyrophosphatase">
    <location>
        <begin position="1"/>
        <end position="497"/>
    </location>
</feature>
<dbReference type="EC" id="3.6.1.40" evidence="1"/>
<dbReference type="EMBL" id="BA000031">
    <property type="protein sequence ID" value="BAC61266.1"/>
    <property type="molecule type" value="Genomic_DNA"/>
</dbReference>
<dbReference type="RefSeq" id="NP_799382.1">
    <property type="nucleotide sequence ID" value="NC_004603.1"/>
</dbReference>
<dbReference type="RefSeq" id="WP_005480964.1">
    <property type="nucleotide sequence ID" value="NC_004603.1"/>
</dbReference>
<dbReference type="SMR" id="Q87KH4"/>
<dbReference type="GeneID" id="1190595"/>
<dbReference type="KEGG" id="vpa:VP3003"/>
<dbReference type="PATRIC" id="fig|223926.6.peg.2888"/>
<dbReference type="eggNOG" id="COG0248">
    <property type="taxonomic scope" value="Bacteria"/>
</dbReference>
<dbReference type="HOGENOM" id="CLU_025908_4_0_6"/>
<dbReference type="UniPathway" id="UPA00908">
    <property type="reaction ID" value="UER00885"/>
</dbReference>
<dbReference type="Proteomes" id="UP000002493">
    <property type="component" value="Chromosome 1"/>
</dbReference>
<dbReference type="GO" id="GO:0008894">
    <property type="term" value="F:guanosine-5'-triphosphate,3'-diphosphate diphosphatase activity"/>
    <property type="evidence" value="ECO:0007669"/>
    <property type="project" value="UniProtKB-UniRule"/>
</dbReference>
<dbReference type="GO" id="GO:0015974">
    <property type="term" value="P:guanosine pentaphosphate catabolic process"/>
    <property type="evidence" value="ECO:0007669"/>
    <property type="project" value="InterPro"/>
</dbReference>
<dbReference type="GO" id="GO:0015970">
    <property type="term" value="P:guanosine tetraphosphate biosynthetic process"/>
    <property type="evidence" value="ECO:0007669"/>
    <property type="project" value="UniProtKB-UniRule"/>
</dbReference>
<dbReference type="GO" id="GO:0015949">
    <property type="term" value="P:nucleobase-containing small molecule interconversion"/>
    <property type="evidence" value="ECO:0007669"/>
    <property type="project" value="TreeGrafter"/>
</dbReference>
<dbReference type="CDD" id="cd24117">
    <property type="entry name" value="ASKHA_NBD_EcGppA-like"/>
    <property type="match status" value="1"/>
</dbReference>
<dbReference type="FunFam" id="3.30.420.150:FF:000001">
    <property type="entry name" value="Guanosine-5'-triphosphate,3'-diphosphate pyrophosphatase"/>
    <property type="match status" value="1"/>
</dbReference>
<dbReference type="FunFam" id="3.30.420.40:FF:000023">
    <property type="entry name" value="Guanosine-5'-triphosphate,3'-diphosphate pyrophosphatase"/>
    <property type="match status" value="1"/>
</dbReference>
<dbReference type="Gene3D" id="3.30.420.40">
    <property type="match status" value="1"/>
</dbReference>
<dbReference type="Gene3D" id="3.30.420.150">
    <property type="entry name" value="Exopolyphosphatase. Domain 2"/>
    <property type="match status" value="1"/>
</dbReference>
<dbReference type="Gene3D" id="1.10.3210.10">
    <property type="entry name" value="Hypothetical protein af1432"/>
    <property type="match status" value="1"/>
</dbReference>
<dbReference type="HAMAP" id="MF_01550">
    <property type="entry name" value="GppA"/>
    <property type="match status" value="1"/>
</dbReference>
<dbReference type="InterPro" id="IPR043129">
    <property type="entry name" value="ATPase_NBD"/>
</dbReference>
<dbReference type="InterPro" id="IPR050273">
    <property type="entry name" value="GppA/Ppx_hydrolase"/>
</dbReference>
<dbReference type="InterPro" id="IPR023709">
    <property type="entry name" value="Guo-5TP_3DP_PyrP"/>
</dbReference>
<dbReference type="InterPro" id="IPR048950">
    <property type="entry name" value="Ppx_GppA_C"/>
</dbReference>
<dbReference type="InterPro" id="IPR003695">
    <property type="entry name" value="Ppx_GppA_N"/>
</dbReference>
<dbReference type="InterPro" id="IPR030673">
    <property type="entry name" value="PyroPPase_GppA_Ppx"/>
</dbReference>
<dbReference type="NCBIfam" id="NF008260">
    <property type="entry name" value="PRK11031.1"/>
    <property type="match status" value="1"/>
</dbReference>
<dbReference type="PANTHER" id="PTHR30005">
    <property type="entry name" value="EXOPOLYPHOSPHATASE"/>
    <property type="match status" value="1"/>
</dbReference>
<dbReference type="PANTHER" id="PTHR30005:SF0">
    <property type="entry name" value="RETROGRADE REGULATION PROTEIN 2"/>
    <property type="match status" value="1"/>
</dbReference>
<dbReference type="Pfam" id="PF02541">
    <property type="entry name" value="Ppx-GppA"/>
    <property type="match status" value="1"/>
</dbReference>
<dbReference type="Pfam" id="PF21447">
    <property type="entry name" value="Ppx-GppA_III"/>
    <property type="match status" value="1"/>
</dbReference>
<dbReference type="PIRSF" id="PIRSF001267">
    <property type="entry name" value="Pyrophosphatase_GppA_Ppx"/>
    <property type="match status" value="1"/>
</dbReference>
<dbReference type="SUPFAM" id="SSF53067">
    <property type="entry name" value="Actin-like ATPase domain"/>
    <property type="match status" value="2"/>
</dbReference>
<dbReference type="SUPFAM" id="SSF109604">
    <property type="entry name" value="HD-domain/PDEase-like"/>
    <property type="match status" value="1"/>
</dbReference>
<comment type="function">
    <text evidence="1">Catalyzes the conversion of pppGpp to ppGpp. Guanosine pentaphosphate (pppGpp) is a cytoplasmic signaling molecule which together with ppGpp controls the 'stringent response', an adaptive process that allows bacteria to respond to amino acid starvation, resulting in the coordinated regulation of numerous cellular activities.</text>
</comment>
<comment type="catalytic activity">
    <reaction evidence="1">
        <text>guanosine 3'-diphosphate 5'-triphosphate + H2O = guanosine 3',5'-bis(diphosphate) + phosphate + H(+)</text>
        <dbReference type="Rhea" id="RHEA:13073"/>
        <dbReference type="ChEBI" id="CHEBI:15377"/>
        <dbReference type="ChEBI" id="CHEBI:15378"/>
        <dbReference type="ChEBI" id="CHEBI:43474"/>
        <dbReference type="ChEBI" id="CHEBI:77828"/>
        <dbReference type="ChEBI" id="CHEBI:142410"/>
        <dbReference type="EC" id="3.6.1.40"/>
    </reaction>
</comment>
<comment type="pathway">
    <text evidence="1">Purine metabolism; ppGpp biosynthesis; ppGpp from GTP: step 2/2.</text>
</comment>
<comment type="similarity">
    <text evidence="1">Belongs to the GppA/Ppx family. GppA subfamily.</text>
</comment>
<organism>
    <name type="scientific">Vibrio parahaemolyticus serotype O3:K6 (strain RIMD 2210633)</name>
    <dbReference type="NCBI Taxonomy" id="223926"/>
    <lineage>
        <taxon>Bacteria</taxon>
        <taxon>Pseudomonadati</taxon>
        <taxon>Pseudomonadota</taxon>
        <taxon>Gammaproteobacteria</taxon>
        <taxon>Vibrionales</taxon>
        <taxon>Vibrionaceae</taxon>
        <taxon>Vibrio</taxon>
    </lineage>
</organism>